<gene>
    <name type="primary">RPS22A</name>
    <name type="synonym">RPS22</name>
    <name type="ordered locus">CAALFM_C106460CA</name>
    <name type="ORF">CaO19.13644</name>
    <name type="ORF">CaO19.6265</name>
</gene>
<name>RS22A_CANAL</name>
<proteinExistence type="evidence at protein level"/>
<organism>
    <name type="scientific">Candida albicans (strain SC5314 / ATCC MYA-2876)</name>
    <name type="common">Yeast</name>
    <dbReference type="NCBI Taxonomy" id="237561"/>
    <lineage>
        <taxon>Eukaryota</taxon>
        <taxon>Fungi</taxon>
        <taxon>Dikarya</taxon>
        <taxon>Ascomycota</taxon>
        <taxon>Saccharomycotina</taxon>
        <taxon>Pichiomycetes</taxon>
        <taxon>Debaryomycetaceae</taxon>
        <taxon>Candida/Lodderomyces clade</taxon>
        <taxon>Candida</taxon>
    </lineage>
</organism>
<evidence type="ECO:0000250" key="1">
    <source>
        <dbReference type="UniProtKB" id="P0C0W1"/>
    </source>
</evidence>
<evidence type="ECO:0000305" key="2"/>
<reference key="1">
    <citation type="submission" date="2001-03" db="EMBL/GenBank/DDBJ databases">
        <title>Evolution of ribosomal protein S14 gene structure: Candida albicans, Schizosaccharomyces pombe, and selected ascomycetous fungi.</title>
        <authorList>
            <person name="Burke T.J."/>
            <person name="Rhoads D.D."/>
        </authorList>
    </citation>
    <scope>NUCLEOTIDE SEQUENCE [GENOMIC DNA]</scope>
    <source>
        <strain>B207</strain>
    </source>
</reference>
<reference key="2">
    <citation type="journal article" date="2004" name="Proc. Natl. Acad. Sci. U.S.A.">
        <title>The diploid genome sequence of Candida albicans.</title>
        <authorList>
            <person name="Jones T."/>
            <person name="Federspiel N.A."/>
            <person name="Chibana H."/>
            <person name="Dungan J."/>
            <person name="Kalman S."/>
            <person name="Magee B.B."/>
            <person name="Newport G."/>
            <person name="Thorstenson Y.R."/>
            <person name="Agabian N."/>
            <person name="Magee P.T."/>
            <person name="Davis R.W."/>
            <person name="Scherer S."/>
        </authorList>
    </citation>
    <scope>NUCLEOTIDE SEQUENCE [LARGE SCALE GENOMIC DNA]</scope>
    <source>
        <strain>SC5314 / ATCC MYA-2876</strain>
    </source>
</reference>
<reference key="3">
    <citation type="journal article" date="2007" name="Genome Biol.">
        <title>Assembly of the Candida albicans genome into sixteen supercontigs aligned on the eight chromosomes.</title>
        <authorList>
            <person name="van het Hoog M."/>
            <person name="Rast T.J."/>
            <person name="Martchenko M."/>
            <person name="Grindle S."/>
            <person name="Dignard D."/>
            <person name="Hogues H."/>
            <person name="Cuomo C."/>
            <person name="Berriman M."/>
            <person name="Scherer S."/>
            <person name="Magee B.B."/>
            <person name="Whiteway M."/>
            <person name="Chibana H."/>
            <person name="Nantel A."/>
            <person name="Magee P.T."/>
        </authorList>
    </citation>
    <scope>GENOME REANNOTATION</scope>
    <source>
        <strain>SC5314 / ATCC MYA-2876</strain>
    </source>
</reference>
<reference key="4">
    <citation type="journal article" date="2013" name="Genome Biol.">
        <title>Assembly of a phased diploid Candida albicans genome facilitates allele-specific measurements and provides a simple model for repeat and indel structure.</title>
        <authorList>
            <person name="Muzzey D."/>
            <person name="Schwartz K."/>
            <person name="Weissman J.S."/>
            <person name="Sherlock G."/>
        </authorList>
    </citation>
    <scope>NUCLEOTIDE SEQUENCE [LARGE SCALE GENOMIC DNA]</scope>
    <scope>GENOME REANNOTATION</scope>
    <source>
        <strain>SC5314 / ATCC MYA-2876</strain>
    </source>
</reference>
<comment type="function">
    <text evidence="1">Component of the ribosome, a large ribonucleoprotein complex responsible for the synthesis of proteins in the cell. The small ribosomal subunit (SSU) binds messenger RNAs (mRNAs) and translates the encoded message by selecting cognate aminoacyl-transfer RNA (tRNA) molecules. The large subunit (LSU) contains the ribosomal catalytic site termed the peptidyl transferase center (PTC), which catalyzes the formation of peptide bonds, thereby polymerizing the amino acids delivered by tRNAs into a polypeptide chain. The nascent polypeptides leave the ribosome through a tunnel in the LSU and interact with protein factors that function in enzymatic processing, targeting, and the membrane insertion of nascent chains at the exit of the ribosomal tunnel.</text>
</comment>
<comment type="subunit">
    <text evidence="1 2">Component of the small ribosomal subunit (SSU) (By similarity). Mature ribosomes consist of a small (40S) and a large (60S) subunit. The 40S subunit contains about 32 different proteins and 1 molecule of RNA (18S). The 60S subunit contains 45 different proteins and 3 molecules of RNA (25S, 5.8S and 5S) (Probable).</text>
</comment>
<comment type="subcellular location">
    <subcellularLocation>
        <location evidence="1">Cytoplasm</location>
    </subcellularLocation>
</comment>
<comment type="similarity">
    <text evidence="2">Belongs to the universal ribosomal protein uS8 family.</text>
</comment>
<sequence length="130" mass="14783">MTRTSVLADALNAINNAEKTGKRQVLIRPSSKVIIKFLTVMQKHGYIGEFEYIDDHRSGKIVVQLNGRLNKCGVIQPRFNVKINDIERWTDNLLPARQFGYVILTTSAGIMDHEEARRKHVSGKILGFVY</sequence>
<accession>Q96W54</accession>
<accession>A0A1D8PD22</accession>
<accession>Q5AAP6</accession>
<keyword id="KW-0002">3D-structure</keyword>
<keyword id="KW-0963">Cytoplasm</keyword>
<keyword id="KW-1185">Reference proteome</keyword>
<keyword id="KW-0687">Ribonucleoprotein</keyword>
<keyword id="KW-0689">Ribosomal protein</keyword>
<dbReference type="EMBL" id="AF365406">
    <property type="protein sequence ID" value="AAK60141.1"/>
    <property type="molecule type" value="Genomic_DNA"/>
</dbReference>
<dbReference type="EMBL" id="CP017623">
    <property type="protein sequence ID" value="AOW26303.1"/>
    <property type="molecule type" value="Genomic_DNA"/>
</dbReference>
<dbReference type="RefSeq" id="XP_019330631.1">
    <property type="nucleotide sequence ID" value="XM_019475086.1"/>
</dbReference>
<dbReference type="RefSeq" id="XP_718852.1">
    <property type="nucleotide sequence ID" value="XM_713759.1"/>
</dbReference>
<dbReference type="PDB" id="7PZY">
    <property type="method" value="EM"/>
    <property type="resolution" value="2.32 A"/>
    <property type="chains" value="X=1-130"/>
</dbReference>
<dbReference type="PDB" id="7Q08">
    <property type="method" value="EM"/>
    <property type="resolution" value="2.56 A"/>
    <property type="chains" value="X=1-130"/>
</dbReference>
<dbReference type="PDB" id="7Q0F">
    <property type="method" value="EM"/>
    <property type="resolution" value="2.64 A"/>
    <property type="chains" value="X=1-130"/>
</dbReference>
<dbReference type="PDB" id="7Q0R">
    <property type="method" value="EM"/>
    <property type="resolution" value="2.67 A"/>
    <property type="chains" value="X=1-130"/>
</dbReference>
<dbReference type="PDB" id="8C3A">
    <property type="method" value="X-ray"/>
    <property type="resolution" value="3.00 A"/>
    <property type="chains" value="DJ/Y=1-130"/>
</dbReference>
<dbReference type="PDB" id="8OGJ">
    <property type="method" value="EM"/>
    <property type="resolution" value="3.10 A"/>
    <property type="chains" value="X=1-130"/>
</dbReference>
<dbReference type="PDB" id="8OH6">
    <property type="method" value="X-ray"/>
    <property type="resolution" value="3.35 A"/>
    <property type="chains" value="DJ/Y=1-130"/>
</dbReference>
<dbReference type="PDB" id="8OI5">
    <property type="method" value="X-ray"/>
    <property type="resolution" value="2.90 A"/>
    <property type="chains" value="DJ/Y=1-130"/>
</dbReference>
<dbReference type="PDB" id="8OJ3">
    <property type="method" value="X-ray"/>
    <property type="resolution" value="3.50 A"/>
    <property type="chains" value="DJ/Y=1-130"/>
</dbReference>
<dbReference type="PDBsum" id="7PZY"/>
<dbReference type="PDBsum" id="7Q08"/>
<dbReference type="PDBsum" id="7Q0F"/>
<dbReference type="PDBsum" id="7Q0R"/>
<dbReference type="PDBsum" id="8C3A"/>
<dbReference type="PDBsum" id="8OGJ"/>
<dbReference type="PDBsum" id="8OH6"/>
<dbReference type="PDBsum" id="8OI5"/>
<dbReference type="PDBsum" id="8OJ3"/>
<dbReference type="EMDB" id="EMD-13737"/>
<dbReference type="EMDB" id="EMD-13741"/>
<dbReference type="EMDB" id="EMD-13744"/>
<dbReference type="EMDB" id="EMD-13750"/>
<dbReference type="SMR" id="Q96W54"/>
<dbReference type="FunCoup" id="Q96W54">
    <property type="interactions" value="1188"/>
</dbReference>
<dbReference type="STRING" id="237561.Q96W54"/>
<dbReference type="EnsemblFungi" id="C1_03620C_A-T">
    <property type="protein sequence ID" value="C1_03620C_A-T-p1"/>
    <property type="gene ID" value="C1_03620C_A"/>
</dbReference>
<dbReference type="EnsemblFungi" id="C1_06460C_A-T">
    <property type="protein sequence ID" value="C1_06460C_A-T-p1"/>
    <property type="gene ID" value="C1_06460C_A"/>
</dbReference>
<dbReference type="GeneID" id="3639551"/>
<dbReference type="KEGG" id="cal:CAALFM_C103620CA"/>
<dbReference type="KEGG" id="cal:CAALFM_C106460CA"/>
<dbReference type="CGD" id="CAL0000190913">
    <property type="gene designation" value="orf19.3061.2"/>
</dbReference>
<dbReference type="CGD" id="CAL0000188584">
    <property type="gene designation" value="RPS22A"/>
</dbReference>
<dbReference type="VEuPathDB" id="FungiDB:C1_03620C_A"/>
<dbReference type="VEuPathDB" id="FungiDB:C1_06460C_A"/>
<dbReference type="eggNOG" id="KOG1754">
    <property type="taxonomic scope" value="Eukaryota"/>
</dbReference>
<dbReference type="HOGENOM" id="CLU_098428_1_1_1"/>
<dbReference type="InParanoid" id="Q96W54"/>
<dbReference type="OMA" id="LPAKNFG"/>
<dbReference type="OrthoDB" id="10250260at2759"/>
<dbReference type="PRO" id="PR:Q96W54"/>
<dbReference type="Proteomes" id="UP000000559">
    <property type="component" value="Chromosome 1"/>
</dbReference>
<dbReference type="GO" id="GO:0022627">
    <property type="term" value="C:cytosolic small ribosomal subunit"/>
    <property type="evidence" value="ECO:0000318"/>
    <property type="project" value="GO_Central"/>
</dbReference>
<dbReference type="GO" id="GO:0003735">
    <property type="term" value="F:structural constituent of ribosome"/>
    <property type="evidence" value="ECO:0000318"/>
    <property type="project" value="GO_Central"/>
</dbReference>
<dbReference type="GO" id="GO:0006412">
    <property type="term" value="P:translation"/>
    <property type="evidence" value="ECO:0007669"/>
    <property type="project" value="InterPro"/>
</dbReference>
<dbReference type="FunFam" id="3.30.1370.30:FF:000001">
    <property type="entry name" value="40S ribosomal protein S15a"/>
    <property type="match status" value="1"/>
</dbReference>
<dbReference type="FunFam" id="3.30.1490.10:FF:000002">
    <property type="entry name" value="40S ribosomal protein S15a"/>
    <property type="match status" value="1"/>
</dbReference>
<dbReference type="Gene3D" id="3.30.1370.30">
    <property type="match status" value="1"/>
</dbReference>
<dbReference type="Gene3D" id="3.30.1490.10">
    <property type="match status" value="1"/>
</dbReference>
<dbReference type="HAMAP" id="MF_01302_A">
    <property type="entry name" value="Ribosomal_uS8_A"/>
    <property type="match status" value="1"/>
</dbReference>
<dbReference type="InterPro" id="IPR000630">
    <property type="entry name" value="Ribosomal_uS8"/>
</dbReference>
<dbReference type="InterPro" id="IPR047863">
    <property type="entry name" value="Ribosomal_uS8_CS"/>
</dbReference>
<dbReference type="InterPro" id="IPR035987">
    <property type="entry name" value="Ribosomal_uS8_sf"/>
</dbReference>
<dbReference type="NCBIfam" id="NF003115">
    <property type="entry name" value="PRK04034.1"/>
    <property type="match status" value="1"/>
</dbReference>
<dbReference type="PANTHER" id="PTHR11758">
    <property type="entry name" value="40S RIBOSOMAL PROTEIN S15A"/>
    <property type="match status" value="1"/>
</dbReference>
<dbReference type="Pfam" id="PF00410">
    <property type="entry name" value="Ribosomal_S8"/>
    <property type="match status" value="1"/>
</dbReference>
<dbReference type="SUPFAM" id="SSF56047">
    <property type="entry name" value="Ribosomal protein S8"/>
    <property type="match status" value="1"/>
</dbReference>
<dbReference type="PROSITE" id="PS00053">
    <property type="entry name" value="RIBOSOMAL_S8"/>
    <property type="match status" value="1"/>
</dbReference>
<feature type="initiator methionine" description="Removed" evidence="1">
    <location>
        <position position="1"/>
    </location>
</feature>
<feature type="chain" id="PRO_0000126617" description="Small ribosomal subunit protein uS8A">
    <location>
        <begin position="2"/>
        <end position="130"/>
    </location>
</feature>
<protein>
    <recommendedName>
        <fullName evidence="1">Small ribosomal subunit protein uS8A</fullName>
    </recommendedName>
    <alternativeName>
        <fullName>40S ribosomal protein S22-A</fullName>
    </alternativeName>
</protein>